<gene>
    <name type="primary">sec16</name>
    <name type="ORF">AO090701000149</name>
</gene>
<reference key="1">
    <citation type="journal article" date="2005" name="Nature">
        <title>Genome sequencing and analysis of Aspergillus oryzae.</title>
        <authorList>
            <person name="Machida M."/>
            <person name="Asai K."/>
            <person name="Sano M."/>
            <person name="Tanaka T."/>
            <person name="Kumagai T."/>
            <person name="Terai G."/>
            <person name="Kusumoto K."/>
            <person name="Arima T."/>
            <person name="Akita O."/>
            <person name="Kashiwagi Y."/>
            <person name="Abe K."/>
            <person name="Gomi K."/>
            <person name="Horiuchi H."/>
            <person name="Kitamoto K."/>
            <person name="Kobayashi T."/>
            <person name="Takeuchi M."/>
            <person name="Denning D.W."/>
            <person name="Galagan J.E."/>
            <person name="Nierman W.C."/>
            <person name="Yu J."/>
            <person name="Archer D.B."/>
            <person name="Bennett J.W."/>
            <person name="Bhatnagar D."/>
            <person name="Cleveland T.E."/>
            <person name="Fedorova N.D."/>
            <person name="Gotoh O."/>
            <person name="Horikawa H."/>
            <person name="Hosoyama A."/>
            <person name="Ichinomiya M."/>
            <person name="Igarashi R."/>
            <person name="Iwashita K."/>
            <person name="Juvvadi P.R."/>
            <person name="Kato M."/>
            <person name="Kato Y."/>
            <person name="Kin T."/>
            <person name="Kokubun A."/>
            <person name="Maeda H."/>
            <person name="Maeyama N."/>
            <person name="Maruyama J."/>
            <person name="Nagasaki H."/>
            <person name="Nakajima T."/>
            <person name="Oda K."/>
            <person name="Okada K."/>
            <person name="Paulsen I."/>
            <person name="Sakamoto K."/>
            <person name="Sawano T."/>
            <person name="Takahashi M."/>
            <person name="Takase K."/>
            <person name="Terabayashi Y."/>
            <person name="Wortman J.R."/>
            <person name="Yamada O."/>
            <person name="Yamagata Y."/>
            <person name="Anazawa H."/>
            <person name="Hata Y."/>
            <person name="Koide Y."/>
            <person name="Komori T."/>
            <person name="Koyama Y."/>
            <person name="Minetoki T."/>
            <person name="Suharnan S."/>
            <person name="Tanaka A."/>
            <person name="Isono K."/>
            <person name="Kuhara S."/>
            <person name="Ogasawara N."/>
            <person name="Kikuchi H."/>
        </authorList>
    </citation>
    <scope>NUCLEOTIDE SEQUENCE [LARGE SCALE GENOMIC DNA]</scope>
    <source>
        <strain>ATCC 42149 / RIB 40</strain>
    </source>
</reference>
<organism>
    <name type="scientific">Aspergillus oryzae (strain ATCC 42149 / RIB 40)</name>
    <name type="common">Yellow koji mold</name>
    <dbReference type="NCBI Taxonomy" id="510516"/>
    <lineage>
        <taxon>Eukaryota</taxon>
        <taxon>Fungi</taxon>
        <taxon>Dikarya</taxon>
        <taxon>Ascomycota</taxon>
        <taxon>Pezizomycotina</taxon>
        <taxon>Eurotiomycetes</taxon>
        <taxon>Eurotiomycetidae</taxon>
        <taxon>Eurotiales</taxon>
        <taxon>Aspergillaceae</taxon>
        <taxon>Aspergillus</taxon>
        <taxon>Aspergillus subgen. Circumdati</taxon>
    </lineage>
</organism>
<name>SEC16_ASPOR</name>
<keyword id="KW-0072">Autophagy</keyword>
<keyword id="KW-0256">Endoplasmic reticulum</keyword>
<keyword id="KW-0931">ER-Golgi transport</keyword>
<keyword id="KW-0472">Membrane</keyword>
<keyword id="KW-0653">Protein transport</keyword>
<keyword id="KW-1185">Reference proteome</keyword>
<keyword id="KW-0813">Transport</keyword>
<comment type="function">
    <text evidence="1">Involved in the initiation of assembly of the COPII coat required for the formation of transport vesicles from the endoplasmic reticulum (ER) and the selection of cargo molecules. Also involved in autophagy (By similarity).</text>
</comment>
<comment type="subcellular location">
    <subcellularLocation>
        <location evidence="1">Endoplasmic reticulum membrane</location>
        <topology evidence="1">Peripheral membrane protein</topology>
        <orientation evidence="1">Cytoplasmic side</orientation>
    </subcellularLocation>
</comment>
<comment type="similarity">
    <text evidence="3">Belongs to the SEC16 family.</text>
</comment>
<proteinExistence type="inferred from homology"/>
<protein>
    <recommendedName>
        <fullName>COPII coat assembly protein sec16</fullName>
    </recommendedName>
    <alternativeName>
        <fullName>Protein transport protein sec16</fullName>
    </alternativeName>
</protein>
<sequence length="1843" mass="194829">MAHNEVSAAWHPALRSEDGVPSNAPVSDDLTQVSKDSMTESAAELKPSEAVIQENDLHSSSTSPDTDASVNVQSTAVPAVLDSDTPVYAEQVLNQENAQKNTAENSAQEDAPDHGQELSQTISDEPHVIETSEESAPTLGAAFGSDANGSHDTAAPDYMMDEPSPAEHDTTERREDNDAASWFNEQVDSGDRQTTNEFVNDDNQDFWGSPTNGDAGDDFFNQLKTQTKPIYIPPETESRYEEGVPLLDNTVESPVQPSMKEESQIDKIFEDDGDDEGGAFFNEVQGSVPNEGVPSPPITRKSTTQVIGSLDASPDSPVSPASSTAQEFNNILAAAASENQVKEDLSDDDLAAKWQAELSDDQPEKSTEDDLAARWQAALDDDDDLLLEDEIGKGPNNGQESLPQNPNGSVHETTQATLSSPFGTPQSSARPQAQPTSYTPHQPSTSDLLQGIPGIAPQSSAAPMQDYFAPPAQPRPTTKRAESFAERSKEGYKSPYDLPDDLTRPRKPVVTHKPVVAQPGSMPPPPRSSSIPVPPTNAPGVPTPPPAPSTVPAVTTPKNFYEELPLPPPRPRSRPASSGRYTPTANIVTSPPSHSQPPPPPPANPYASLSPPPQDSGSVGSQTQLQQPERLDPYANLLGPGAPGAPAAPSAASRYSPKPPTLQPGTKPPSAPRYSPAPPQSAAPAPPRTRYASQPSSVSSQGAVLPFQPRTSSPLAHHEKVSYQPPEGLAIRSAPESASSYAPNGMQPRPNQQDVSNSITAPVGAAGSAAVTAVPENVSAAIQPTSPPRNPYAPPAYINEFSKRVAPMASPPPAVVPPTGDAQFVPPRRSQTQSPSQQASAPGLSVPSDSLQRPASVHAPASPTKSANPYAPSQISIHNRVPSQPLEFIPPNDGQELDPLERWKGAPIVKFGFGGSITSCFPKHVPRYAAGQAAPKIKSTPGEVKIFSANDWVPITEGIVQHPGPLKNKSKKKDLVAWLSSKIAAFENEGISEAAQLHPESSKRHDEKILLWKIVRALVEHDGVLEGSAEVEKSLRYIIFPHLQNSEPESTSGVNLPAFNALPPLNAPSQSDATDSQSLESIRNSLLVGNREKAVWDAVDNRLWGHAMVIASTLDRSVWKQVVQEFVRREVKSTTGNSESLAALYEIFAGNVDESVDELVPPSARAGFQMVSKVGGQGPSKNALEGLDSWRDTLGLVLSNRSPEDHKALLALGRLLLSYGRTEAAHICFMFSRAAVFGGADDPQTSIVLLGADHQHLPLNVLQDDDAILLTEAYEYAVSVLAGSPTSTLPHLLAFKLIHACSLAEHGRKSEALQYVDAITAALNATTKPSGYHNQHLLFGVDELSARLRQTTSDSGSSWISRPSMEKVSGSMWAKFNSFVAGEDSDAASTGSGKAGDGDIGPFAKFSGTPTVSRSPSVSDFGPYSLPAAQSVPGSGPSRYQPGNQYVPNSSPEQYRGRSSLDSQRSSSFGFPFGQRRGSQEPSTPVESSMYQGGPLYGSPSAAGYQSTPPQASYMPLAPVVEDSAPQPYPVEPAPMQGSPVNISPYQPPANESFGEPLDQSSATVPASSMAGYVPPGAGGGYEPPSVEISAAPALDTTEEPTHQDVLKKKKSFMDDDDDDDLAARAAAIQKAEKARKDREADEAFRKAAEADAKRPPAAKKSWFGGWFGGAKKENDNNNNSGGPIRAKLGEENSFYYDKELKKWVNKKDPNSASVSRGTPPPPKASAPSRSASGSTAPPAASMGLGLDSRPPSSAGAPPSLSSSPAPPSLAAPPPMLGTARSASTSAAMPTPPIGSSLPPPPRPATSLSNASSIDDLLGAPQARKGTSAKGRKKGRYVDVMAK</sequence>
<accession>Q2U968</accession>
<feature type="chain" id="PRO_0000295531" description="COPII coat assembly protein sec16">
    <location>
        <begin position="1"/>
        <end position="1843"/>
    </location>
</feature>
<feature type="region of interest" description="Disordered" evidence="2">
    <location>
        <begin position="1"/>
        <end position="220"/>
    </location>
</feature>
<feature type="region of interest" description="Disordered" evidence="2">
    <location>
        <begin position="269"/>
        <end position="324"/>
    </location>
</feature>
<feature type="region of interest" description="Disordered" evidence="2">
    <location>
        <begin position="339"/>
        <end position="769"/>
    </location>
</feature>
<feature type="region of interest" description="Disordered" evidence="2">
    <location>
        <begin position="807"/>
        <end position="872"/>
    </location>
</feature>
<feature type="region of interest" description="Disordered" evidence="2">
    <location>
        <begin position="1385"/>
        <end position="1691"/>
    </location>
</feature>
<feature type="region of interest" description="Disordered" evidence="2">
    <location>
        <begin position="1706"/>
        <end position="1843"/>
    </location>
</feature>
<feature type="compositionally biased region" description="Polar residues" evidence="2">
    <location>
        <begin position="29"/>
        <end position="40"/>
    </location>
</feature>
<feature type="compositionally biased region" description="Polar residues" evidence="2">
    <location>
        <begin position="58"/>
        <end position="76"/>
    </location>
</feature>
<feature type="compositionally biased region" description="Polar residues" evidence="2">
    <location>
        <begin position="92"/>
        <end position="108"/>
    </location>
</feature>
<feature type="compositionally biased region" description="Basic and acidic residues" evidence="2">
    <location>
        <begin position="165"/>
        <end position="177"/>
    </location>
</feature>
<feature type="compositionally biased region" description="Polar residues" evidence="2">
    <location>
        <begin position="183"/>
        <end position="198"/>
    </location>
</feature>
<feature type="compositionally biased region" description="Low complexity" evidence="2">
    <location>
        <begin position="309"/>
        <end position="323"/>
    </location>
</feature>
<feature type="compositionally biased region" description="Basic and acidic residues" evidence="2">
    <location>
        <begin position="362"/>
        <end position="372"/>
    </location>
</feature>
<feature type="compositionally biased region" description="Acidic residues" evidence="2">
    <location>
        <begin position="379"/>
        <end position="389"/>
    </location>
</feature>
<feature type="compositionally biased region" description="Polar residues" evidence="2">
    <location>
        <begin position="396"/>
        <end position="448"/>
    </location>
</feature>
<feature type="compositionally biased region" description="Basic and acidic residues" evidence="2">
    <location>
        <begin position="479"/>
        <end position="492"/>
    </location>
</feature>
<feature type="compositionally biased region" description="Pro residues" evidence="2">
    <location>
        <begin position="521"/>
        <end position="549"/>
    </location>
</feature>
<feature type="compositionally biased region" description="Polar residues" evidence="2">
    <location>
        <begin position="579"/>
        <end position="589"/>
    </location>
</feature>
<feature type="compositionally biased region" description="Pro residues" evidence="2">
    <location>
        <begin position="594"/>
        <end position="614"/>
    </location>
</feature>
<feature type="compositionally biased region" description="Polar residues" evidence="2">
    <location>
        <begin position="615"/>
        <end position="627"/>
    </location>
</feature>
<feature type="compositionally biased region" description="Low complexity" evidence="2">
    <location>
        <begin position="644"/>
        <end position="656"/>
    </location>
</feature>
<feature type="compositionally biased region" description="Pro residues" evidence="2">
    <location>
        <begin position="657"/>
        <end position="687"/>
    </location>
</feature>
<feature type="compositionally biased region" description="Polar residues" evidence="2">
    <location>
        <begin position="691"/>
        <end position="702"/>
    </location>
</feature>
<feature type="compositionally biased region" description="Polar residues" evidence="2">
    <location>
        <begin position="749"/>
        <end position="759"/>
    </location>
</feature>
<feature type="compositionally biased region" description="Low complexity" evidence="2">
    <location>
        <begin position="760"/>
        <end position="769"/>
    </location>
</feature>
<feature type="compositionally biased region" description="Low complexity" evidence="2">
    <location>
        <begin position="826"/>
        <end position="842"/>
    </location>
</feature>
<feature type="compositionally biased region" description="Polar residues" evidence="2">
    <location>
        <begin position="863"/>
        <end position="872"/>
    </location>
</feature>
<feature type="compositionally biased region" description="Polar residues" evidence="2">
    <location>
        <begin position="1408"/>
        <end position="1418"/>
    </location>
</feature>
<feature type="compositionally biased region" description="Polar residues" evidence="2">
    <location>
        <begin position="1441"/>
        <end position="1453"/>
    </location>
</feature>
<feature type="compositionally biased region" description="Low complexity" evidence="2">
    <location>
        <begin position="1457"/>
        <end position="1468"/>
    </location>
</feature>
<feature type="compositionally biased region" description="Polar residues" evidence="2">
    <location>
        <begin position="1480"/>
        <end position="1491"/>
    </location>
</feature>
<feature type="compositionally biased region" description="Basic and acidic residues" evidence="2">
    <location>
        <begin position="1631"/>
        <end position="1655"/>
    </location>
</feature>
<feature type="compositionally biased region" description="Low complexity" evidence="2">
    <location>
        <begin position="1726"/>
        <end position="1742"/>
    </location>
</feature>
<feature type="compositionally biased region" description="Low complexity" evidence="2">
    <location>
        <begin position="1751"/>
        <end position="1764"/>
    </location>
</feature>
<feature type="compositionally biased region" description="Pro residues" evidence="2">
    <location>
        <begin position="1765"/>
        <end position="1776"/>
    </location>
</feature>
<feature type="compositionally biased region" description="Pro residues" evidence="2">
    <location>
        <begin position="1790"/>
        <end position="1804"/>
    </location>
</feature>
<dbReference type="EMBL" id="BA000053">
    <property type="protein sequence ID" value="BAE61897.1"/>
    <property type="molecule type" value="Genomic_DNA"/>
</dbReference>
<dbReference type="RefSeq" id="XP_001823030.1">
    <property type="nucleotide sequence ID" value="XM_001822978.2"/>
</dbReference>
<dbReference type="SMR" id="Q2U968"/>
<dbReference type="STRING" id="510516.Q2U968"/>
<dbReference type="EnsemblFungi" id="BAE61897">
    <property type="protein sequence ID" value="BAE61897"/>
    <property type="gene ID" value="AO090701000149"/>
</dbReference>
<dbReference type="GeneID" id="5995087"/>
<dbReference type="KEGG" id="aor:AO090701000149"/>
<dbReference type="VEuPathDB" id="FungiDB:AO090701000149"/>
<dbReference type="HOGENOM" id="CLU_001147_0_0_1"/>
<dbReference type="OMA" id="YKSPYDL"/>
<dbReference type="OrthoDB" id="113506at5052"/>
<dbReference type="Proteomes" id="UP000006564">
    <property type="component" value="Chromosome 5"/>
</dbReference>
<dbReference type="GO" id="GO:0070971">
    <property type="term" value="C:endoplasmic reticulum exit site"/>
    <property type="evidence" value="ECO:0007669"/>
    <property type="project" value="UniProtKB-ARBA"/>
</dbReference>
<dbReference type="GO" id="GO:0005789">
    <property type="term" value="C:endoplasmic reticulum membrane"/>
    <property type="evidence" value="ECO:0007669"/>
    <property type="project" value="UniProtKB-SubCell"/>
</dbReference>
<dbReference type="GO" id="GO:0012507">
    <property type="term" value="C:ER to Golgi transport vesicle membrane"/>
    <property type="evidence" value="ECO:0007669"/>
    <property type="project" value="TreeGrafter"/>
</dbReference>
<dbReference type="GO" id="GO:0006914">
    <property type="term" value="P:autophagy"/>
    <property type="evidence" value="ECO:0007669"/>
    <property type="project" value="UniProtKB-KW"/>
</dbReference>
<dbReference type="GO" id="GO:0007030">
    <property type="term" value="P:Golgi organization"/>
    <property type="evidence" value="ECO:0007669"/>
    <property type="project" value="TreeGrafter"/>
</dbReference>
<dbReference type="GO" id="GO:0046907">
    <property type="term" value="P:intracellular transport"/>
    <property type="evidence" value="ECO:0007669"/>
    <property type="project" value="UniProtKB-ARBA"/>
</dbReference>
<dbReference type="GO" id="GO:0070973">
    <property type="term" value="P:protein localization to endoplasmic reticulum exit site"/>
    <property type="evidence" value="ECO:0007669"/>
    <property type="project" value="TreeGrafter"/>
</dbReference>
<dbReference type="GO" id="GO:0015031">
    <property type="term" value="P:protein transport"/>
    <property type="evidence" value="ECO:0007669"/>
    <property type="project" value="UniProtKB-KW"/>
</dbReference>
<dbReference type="GO" id="GO:0016192">
    <property type="term" value="P:vesicle-mediated transport"/>
    <property type="evidence" value="ECO:0007669"/>
    <property type="project" value="UniProtKB-KW"/>
</dbReference>
<dbReference type="CDD" id="cd09233">
    <property type="entry name" value="ACE1-Sec16-like"/>
    <property type="match status" value="1"/>
</dbReference>
<dbReference type="FunFam" id="1.25.40.1030:FF:000008">
    <property type="entry name" value="Protein transport protein sec16"/>
    <property type="match status" value="1"/>
</dbReference>
<dbReference type="Gene3D" id="1.25.40.1030">
    <property type="match status" value="1"/>
</dbReference>
<dbReference type="InterPro" id="IPR024340">
    <property type="entry name" value="Sec16_CCD"/>
</dbReference>
<dbReference type="InterPro" id="IPR024468">
    <property type="entry name" value="Sec16_N"/>
</dbReference>
<dbReference type="InterPro" id="IPR024298">
    <property type="entry name" value="Sec16_Sec23-bd"/>
</dbReference>
<dbReference type="PANTHER" id="PTHR13402">
    <property type="entry name" value="RGPR-RELATED"/>
    <property type="match status" value="1"/>
</dbReference>
<dbReference type="PANTHER" id="PTHR13402:SF6">
    <property type="entry name" value="SECRETORY 16, ISOFORM I"/>
    <property type="match status" value="1"/>
</dbReference>
<dbReference type="Pfam" id="PF12932">
    <property type="entry name" value="Sec16"/>
    <property type="match status" value="1"/>
</dbReference>
<dbReference type="Pfam" id="PF12935">
    <property type="entry name" value="Sec16_N"/>
    <property type="match status" value="1"/>
</dbReference>
<dbReference type="Pfam" id="PF12931">
    <property type="entry name" value="TPR_Sec16"/>
    <property type="match status" value="1"/>
</dbReference>
<evidence type="ECO:0000250" key="1"/>
<evidence type="ECO:0000256" key="2">
    <source>
        <dbReference type="SAM" id="MobiDB-lite"/>
    </source>
</evidence>
<evidence type="ECO:0000305" key="3"/>